<feature type="chain" id="PRO_0000111343" description="Small ribosomal subunit protein uS9">
    <location>
        <begin position="1"/>
        <end position="134"/>
    </location>
</feature>
<feature type="region of interest" description="Disordered" evidence="1">
    <location>
        <begin position="97"/>
        <end position="134"/>
    </location>
</feature>
<feature type="compositionally biased region" description="Basic residues" evidence="1">
    <location>
        <begin position="115"/>
        <end position="134"/>
    </location>
</feature>
<evidence type="ECO:0000256" key="1">
    <source>
        <dbReference type="SAM" id="MobiDB-lite"/>
    </source>
</evidence>
<evidence type="ECO:0000305" key="2"/>
<sequence>MAKSTIQESVATGRRKQAVSSVRLRPGSGKIDVNGKSFEDYFPLEIQRTTILSPLKKITEDQSQYDLIIRVSGGGIQGQVIATRLGLARALLKENEENRQDLKSCGFLTRDPRKKERKKYGHKKARKSFQFSKR</sequence>
<proteinExistence type="inferred from homology"/>
<name>RS9_CHLPN</name>
<protein>
    <recommendedName>
        <fullName evidence="2">Small ribosomal subunit protein uS9</fullName>
    </recommendedName>
    <alternativeName>
        <fullName>30S ribosomal protein S9</fullName>
    </alternativeName>
</protein>
<dbReference type="EMBL" id="AE001363">
    <property type="protein sequence ID" value="AAD18399.1"/>
    <property type="molecule type" value="Genomic_DNA"/>
</dbReference>
<dbReference type="EMBL" id="AE002161">
    <property type="protein sequence ID" value="AAF38343.1"/>
    <property type="molecule type" value="Genomic_DNA"/>
</dbReference>
<dbReference type="EMBL" id="BA000008">
    <property type="protein sequence ID" value="BAA98456.1"/>
    <property type="molecule type" value="Genomic_DNA"/>
</dbReference>
<dbReference type="EMBL" id="AE009440">
    <property type="protein sequence ID" value="AAP98186.1"/>
    <property type="molecule type" value="Genomic_DNA"/>
</dbReference>
<dbReference type="PIR" id="B72101">
    <property type="entry name" value="B72101"/>
</dbReference>
<dbReference type="PIR" id="F86521">
    <property type="entry name" value="F86521"/>
</dbReference>
<dbReference type="RefSeq" id="NP_224455.1">
    <property type="nucleotide sequence ID" value="NC_000922.1"/>
</dbReference>
<dbReference type="RefSeq" id="WP_010882898.1">
    <property type="nucleotide sequence ID" value="NZ_LN847257.1"/>
</dbReference>
<dbReference type="SMR" id="Q9Z8T8"/>
<dbReference type="STRING" id="406984.CPK_ORF00757"/>
<dbReference type="DrugCentral" id="Q9Z8T8"/>
<dbReference type="GeneID" id="45050293"/>
<dbReference type="KEGG" id="cpa:CP_0516"/>
<dbReference type="KEGG" id="cpj:rs9"/>
<dbReference type="KEGG" id="cpn:CPn_0246"/>
<dbReference type="KEGG" id="cpt:CpB0253"/>
<dbReference type="PATRIC" id="fig|115713.3.peg.278"/>
<dbReference type="eggNOG" id="COG0103">
    <property type="taxonomic scope" value="Bacteria"/>
</dbReference>
<dbReference type="HOGENOM" id="CLU_046483_2_1_0"/>
<dbReference type="OMA" id="KFQFSKR"/>
<dbReference type="OrthoDB" id="9803965at2"/>
<dbReference type="Proteomes" id="UP000000583">
    <property type="component" value="Chromosome"/>
</dbReference>
<dbReference type="Proteomes" id="UP000000801">
    <property type="component" value="Chromosome"/>
</dbReference>
<dbReference type="GO" id="GO:0022627">
    <property type="term" value="C:cytosolic small ribosomal subunit"/>
    <property type="evidence" value="ECO:0007669"/>
    <property type="project" value="TreeGrafter"/>
</dbReference>
<dbReference type="GO" id="GO:0003723">
    <property type="term" value="F:RNA binding"/>
    <property type="evidence" value="ECO:0007669"/>
    <property type="project" value="TreeGrafter"/>
</dbReference>
<dbReference type="GO" id="GO:0003735">
    <property type="term" value="F:structural constituent of ribosome"/>
    <property type="evidence" value="ECO:0007669"/>
    <property type="project" value="InterPro"/>
</dbReference>
<dbReference type="GO" id="GO:0006412">
    <property type="term" value="P:translation"/>
    <property type="evidence" value="ECO:0007669"/>
    <property type="project" value="UniProtKB-UniRule"/>
</dbReference>
<dbReference type="FunFam" id="3.30.230.10:FF:000001">
    <property type="entry name" value="30S ribosomal protein S9"/>
    <property type="match status" value="1"/>
</dbReference>
<dbReference type="Gene3D" id="3.30.230.10">
    <property type="match status" value="1"/>
</dbReference>
<dbReference type="HAMAP" id="MF_00532_B">
    <property type="entry name" value="Ribosomal_uS9_B"/>
    <property type="match status" value="1"/>
</dbReference>
<dbReference type="InterPro" id="IPR020568">
    <property type="entry name" value="Ribosomal_Su5_D2-typ_SF"/>
</dbReference>
<dbReference type="InterPro" id="IPR000754">
    <property type="entry name" value="Ribosomal_uS9"/>
</dbReference>
<dbReference type="InterPro" id="IPR023035">
    <property type="entry name" value="Ribosomal_uS9_bac/plastid"/>
</dbReference>
<dbReference type="InterPro" id="IPR020574">
    <property type="entry name" value="Ribosomal_uS9_CS"/>
</dbReference>
<dbReference type="InterPro" id="IPR014721">
    <property type="entry name" value="Ribsml_uS5_D2-typ_fold_subgr"/>
</dbReference>
<dbReference type="NCBIfam" id="NF001099">
    <property type="entry name" value="PRK00132.1"/>
    <property type="match status" value="1"/>
</dbReference>
<dbReference type="PANTHER" id="PTHR21569">
    <property type="entry name" value="RIBOSOMAL PROTEIN S9"/>
    <property type="match status" value="1"/>
</dbReference>
<dbReference type="PANTHER" id="PTHR21569:SF1">
    <property type="entry name" value="SMALL RIBOSOMAL SUBUNIT PROTEIN US9M"/>
    <property type="match status" value="1"/>
</dbReference>
<dbReference type="Pfam" id="PF00380">
    <property type="entry name" value="Ribosomal_S9"/>
    <property type="match status" value="1"/>
</dbReference>
<dbReference type="SUPFAM" id="SSF54211">
    <property type="entry name" value="Ribosomal protein S5 domain 2-like"/>
    <property type="match status" value="1"/>
</dbReference>
<dbReference type="PROSITE" id="PS00360">
    <property type="entry name" value="RIBOSOMAL_S9"/>
    <property type="match status" value="1"/>
</dbReference>
<accession>Q9Z8T8</accession>
<accession>Q9JQJ9</accession>
<reference key="1">
    <citation type="journal article" date="1999" name="Nat. Genet.">
        <title>Comparative genomes of Chlamydia pneumoniae and C. trachomatis.</title>
        <authorList>
            <person name="Kalman S."/>
            <person name="Mitchell W.P."/>
            <person name="Marathe R."/>
            <person name="Lammel C.J."/>
            <person name="Fan J."/>
            <person name="Hyman R.W."/>
            <person name="Olinger L."/>
            <person name="Grimwood J."/>
            <person name="Davis R.W."/>
            <person name="Stephens R.S."/>
        </authorList>
    </citation>
    <scope>NUCLEOTIDE SEQUENCE [LARGE SCALE GENOMIC DNA]</scope>
    <source>
        <strain>CWL029</strain>
    </source>
</reference>
<reference key="2">
    <citation type="journal article" date="2000" name="Nucleic Acids Res.">
        <title>Genome sequences of Chlamydia trachomatis MoPn and Chlamydia pneumoniae AR39.</title>
        <authorList>
            <person name="Read T.D."/>
            <person name="Brunham R.C."/>
            <person name="Shen C."/>
            <person name="Gill S.R."/>
            <person name="Heidelberg J.F."/>
            <person name="White O."/>
            <person name="Hickey E.K."/>
            <person name="Peterson J.D."/>
            <person name="Utterback T.R."/>
            <person name="Berry K.J."/>
            <person name="Bass S."/>
            <person name="Linher K.D."/>
            <person name="Weidman J.F."/>
            <person name="Khouri H.M."/>
            <person name="Craven B."/>
            <person name="Bowman C."/>
            <person name="Dodson R.J."/>
            <person name="Gwinn M.L."/>
            <person name="Nelson W.C."/>
            <person name="DeBoy R.T."/>
            <person name="Kolonay J.F."/>
            <person name="McClarty G."/>
            <person name="Salzberg S.L."/>
            <person name="Eisen J.A."/>
            <person name="Fraser C.M."/>
        </authorList>
    </citation>
    <scope>NUCLEOTIDE SEQUENCE [LARGE SCALE GENOMIC DNA]</scope>
    <source>
        <strain>AR39</strain>
    </source>
</reference>
<reference key="3">
    <citation type="journal article" date="2000" name="Nucleic Acids Res.">
        <title>Comparison of whole genome sequences of Chlamydia pneumoniae J138 from Japan and CWL029 from USA.</title>
        <authorList>
            <person name="Shirai M."/>
            <person name="Hirakawa H."/>
            <person name="Kimoto M."/>
            <person name="Tabuchi M."/>
            <person name="Kishi F."/>
            <person name="Ouchi K."/>
            <person name="Shiba T."/>
            <person name="Ishii K."/>
            <person name="Hattori M."/>
            <person name="Kuhara S."/>
            <person name="Nakazawa T."/>
        </authorList>
    </citation>
    <scope>NUCLEOTIDE SEQUENCE [LARGE SCALE GENOMIC DNA]</scope>
    <source>
        <strain>J138</strain>
    </source>
</reference>
<reference key="4">
    <citation type="submission" date="2002-05" db="EMBL/GenBank/DDBJ databases">
        <title>The genome sequence of Chlamydia pneumoniae TW183 and comparison with other Chlamydia strains based on whole genome sequence analysis.</title>
        <authorList>
            <person name="Geng M.M."/>
            <person name="Schuhmacher A."/>
            <person name="Muehldorfer I."/>
            <person name="Bensch K.W."/>
            <person name="Schaefer K.P."/>
            <person name="Schneider S."/>
            <person name="Pohl T."/>
            <person name="Essig A."/>
            <person name="Marre R."/>
            <person name="Melchers K."/>
        </authorList>
    </citation>
    <scope>NUCLEOTIDE SEQUENCE [LARGE SCALE GENOMIC DNA]</scope>
    <source>
        <strain>TW-183</strain>
    </source>
</reference>
<organism>
    <name type="scientific">Chlamydia pneumoniae</name>
    <name type="common">Chlamydophila pneumoniae</name>
    <dbReference type="NCBI Taxonomy" id="83558"/>
    <lineage>
        <taxon>Bacteria</taxon>
        <taxon>Pseudomonadati</taxon>
        <taxon>Chlamydiota</taxon>
        <taxon>Chlamydiia</taxon>
        <taxon>Chlamydiales</taxon>
        <taxon>Chlamydiaceae</taxon>
        <taxon>Chlamydia/Chlamydophila group</taxon>
        <taxon>Chlamydia</taxon>
    </lineage>
</organism>
<comment type="similarity">
    <text evidence="2">Belongs to the universal ribosomal protein uS9 family.</text>
</comment>
<keyword id="KW-0687">Ribonucleoprotein</keyword>
<keyword id="KW-0689">Ribosomal protein</keyword>
<gene>
    <name type="primary">rpsI</name>
    <name type="synonym">rs9</name>
    <name type="ordered locus">CPn_0246</name>
    <name type="ordered locus">CP_0516</name>
    <name type="ordered locus">CpB0253</name>
</gene>